<comment type="function">
    <text evidence="1">Catalyzes the NAD(+)-dependent oxidation of L-threonine to 2-amino-3-ketobutyrate.</text>
</comment>
<comment type="catalytic activity">
    <reaction evidence="1">
        <text>L-threonine + NAD(+) = (2S)-2-amino-3-oxobutanoate + NADH + H(+)</text>
        <dbReference type="Rhea" id="RHEA:13161"/>
        <dbReference type="ChEBI" id="CHEBI:15378"/>
        <dbReference type="ChEBI" id="CHEBI:57540"/>
        <dbReference type="ChEBI" id="CHEBI:57926"/>
        <dbReference type="ChEBI" id="CHEBI:57945"/>
        <dbReference type="ChEBI" id="CHEBI:78948"/>
        <dbReference type="EC" id="1.1.1.103"/>
    </reaction>
</comment>
<comment type="cofactor">
    <cofactor evidence="1">
        <name>Zn(2+)</name>
        <dbReference type="ChEBI" id="CHEBI:29105"/>
    </cofactor>
    <text evidence="1">Binds 2 Zn(2+) ions per subunit.</text>
</comment>
<comment type="pathway">
    <text evidence="1">Amino-acid degradation; L-threonine degradation via oxydo-reductase pathway; glycine from L-threonine: step 1/2.</text>
</comment>
<comment type="subunit">
    <text evidence="1">Homotetramer.</text>
</comment>
<comment type="subcellular location">
    <subcellularLocation>
        <location evidence="1">Cytoplasm</location>
    </subcellularLocation>
</comment>
<comment type="similarity">
    <text evidence="1">Belongs to the zinc-containing alcohol dehydrogenase family.</text>
</comment>
<protein>
    <recommendedName>
        <fullName evidence="1">L-threonine 3-dehydrogenase</fullName>
        <shortName evidence="1">TDH</shortName>
        <ecNumber evidence="1">1.1.1.103</ecNumber>
    </recommendedName>
</protein>
<name>TDH_ECODH</name>
<gene>
    <name evidence="1" type="primary">tdh</name>
    <name type="ordered locus">ECDH10B_3798</name>
</gene>
<proteinExistence type="inferred from homology"/>
<feature type="chain" id="PRO_1000130548" description="L-threonine 3-dehydrogenase">
    <location>
        <begin position="1"/>
        <end position="341"/>
    </location>
</feature>
<feature type="active site" description="Charge relay system" evidence="1">
    <location>
        <position position="40"/>
    </location>
</feature>
<feature type="active site" description="Charge relay system" evidence="1">
    <location>
        <position position="43"/>
    </location>
</feature>
<feature type="binding site" evidence="1">
    <location>
        <position position="38"/>
    </location>
    <ligand>
        <name>Zn(2+)</name>
        <dbReference type="ChEBI" id="CHEBI:29105"/>
        <label>1</label>
        <note>catalytic</note>
    </ligand>
</feature>
<feature type="binding site" evidence="1">
    <location>
        <position position="63"/>
    </location>
    <ligand>
        <name>Zn(2+)</name>
        <dbReference type="ChEBI" id="CHEBI:29105"/>
        <label>1</label>
        <note>catalytic</note>
    </ligand>
</feature>
<feature type="binding site" evidence="1">
    <location>
        <position position="64"/>
    </location>
    <ligand>
        <name>Zn(2+)</name>
        <dbReference type="ChEBI" id="CHEBI:29105"/>
        <label>1</label>
        <note>catalytic</note>
    </ligand>
</feature>
<feature type="binding site" evidence="1">
    <location>
        <position position="93"/>
    </location>
    <ligand>
        <name>Zn(2+)</name>
        <dbReference type="ChEBI" id="CHEBI:29105"/>
        <label>2</label>
    </ligand>
</feature>
<feature type="binding site" evidence="1">
    <location>
        <position position="96"/>
    </location>
    <ligand>
        <name>Zn(2+)</name>
        <dbReference type="ChEBI" id="CHEBI:29105"/>
        <label>2</label>
    </ligand>
</feature>
<feature type="binding site" evidence="1">
    <location>
        <position position="99"/>
    </location>
    <ligand>
        <name>Zn(2+)</name>
        <dbReference type="ChEBI" id="CHEBI:29105"/>
        <label>2</label>
    </ligand>
</feature>
<feature type="binding site" evidence="1">
    <location>
        <position position="107"/>
    </location>
    <ligand>
        <name>Zn(2+)</name>
        <dbReference type="ChEBI" id="CHEBI:29105"/>
        <label>2</label>
    </ligand>
</feature>
<feature type="binding site" evidence="1">
    <location>
        <position position="175"/>
    </location>
    <ligand>
        <name>NAD(+)</name>
        <dbReference type="ChEBI" id="CHEBI:57540"/>
    </ligand>
</feature>
<feature type="binding site" evidence="1">
    <location>
        <position position="195"/>
    </location>
    <ligand>
        <name>NAD(+)</name>
        <dbReference type="ChEBI" id="CHEBI:57540"/>
    </ligand>
</feature>
<feature type="binding site" evidence="1">
    <location>
        <position position="200"/>
    </location>
    <ligand>
        <name>NAD(+)</name>
        <dbReference type="ChEBI" id="CHEBI:57540"/>
    </ligand>
</feature>
<feature type="binding site" evidence="1">
    <location>
        <begin position="262"/>
        <end position="264"/>
    </location>
    <ligand>
        <name>NAD(+)</name>
        <dbReference type="ChEBI" id="CHEBI:57540"/>
    </ligand>
</feature>
<feature type="binding site" evidence="1">
    <location>
        <begin position="286"/>
        <end position="287"/>
    </location>
    <ligand>
        <name>NAD(+)</name>
        <dbReference type="ChEBI" id="CHEBI:57540"/>
    </ligand>
</feature>
<feature type="site" description="Important for catalytic activity for the proton relay mechanism but does not participate directly in the coordination of zinc atom" evidence="1">
    <location>
        <position position="148"/>
    </location>
</feature>
<dbReference type="EC" id="1.1.1.103" evidence="1"/>
<dbReference type="EMBL" id="CP000948">
    <property type="protein sequence ID" value="ACB04666.1"/>
    <property type="molecule type" value="Genomic_DNA"/>
</dbReference>
<dbReference type="RefSeq" id="WP_000646007.1">
    <property type="nucleotide sequence ID" value="NC_010473.1"/>
</dbReference>
<dbReference type="SMR" id="B1X950"/>
<dbReference type="KEGG" id="ecd:ECDH10B_3798"/>
<dbReference type="HOGENOM" id="CLU_026673_11_0_6"/>
<dbReference type="UniPathway" id="UPA00046">
    <property type="reaction ID" value="UER00505"/>
</dbReference>
<dbReference type="GO" id="GO:0005737">
    <property type="term" value="C:cytoplasm"/>
    <property type="evidence" value="ECO:0007669"/>
    <property type="project" value="UniProtKB-SubCell"/>
</dbReference>
<dbReference type="GO" id="GO:0008743">
    <property type="term" value="F:L-threonine 3-dehydrogenase activity"/>
    <property type="evidence" value="ECO:0007669"/>
    <property type="project" value="UniProtKB-UniRule"/>
</dbReference>
<dbReference type="GO" id="GO:0008270">
    <property type="term" value="F:zinc ion binding"/>
    <property type="evidence" value="ECO:0007669"/>
    <property type="project" value="UniProtKB-UniRule"/>
</dbReference>
<dbReference type="GO" id="GO:0019518">
    <property type="term" value="P:L-threonine catabolic process to glycine"/>
    <property type="evidence" value="ECO:0007669"/>
    <property type="project" value="UniProtKB-UniPathway"/>
</dbReference>
<dbReference type="FunFam" id="3.40.50.720:FF:000059">
    <property type="entry name" value="L-threonine 3-dehydrogenase"/>
    <property type="match status" value="1"/>
</dbReference>
<dbReference type="Gene3D" id="3.90.180.10">
    <property type="entry name" value="Medium-chain alcohol dehydrogenases, catalytic domain"/>
    <property type="match status" value="1"/>
</dbReference>
<dbReference type="Gene3D" id="3.40.50.720">
    <property type="entry name" value="NAD(P)-binding Rossmann-like Domain"/>
    <property type="match status" value="1"/>
</dbReference>
<dbReference type="HAMAP" id="MF_00627">
    <property type="entry name" value="Thr_dehydrog"/>
    <property type="match status" value="1"/>
</dbReference>
<dbReference type="InterPro" id="IPR013149">
    <property type="entry name" value="ADH-like_C"/>
</dbReference>
<dbReference type="InterPro" id="IPR013154">
    <property type="entry name" value="ADH-like_N"/>
</dbReference>
<dbReference type="InterPro" id="IPR002328">
    <property type="entry name" value="ADH_Zn_CS"/>
</dbReference>
<dbReference type="InterPro" id="IPR011032">
    <property type="entry name" value="GroES-like_sf"/>
</dbReference>
<dbReference type="InterPro" id="IPR004627">
    <property type="entry name" value="L-Threonine_3-DHase"/>
</dbReference>
<dbReference type="InterPro" id="IPR036291">
    <property type="entry name" value="NAD(P)-bd_dom_sf"/>
</dbReference>
<dbReference type="InterPro" id="IPR020843">
    <property type="entry name" value="PKS_ER"/>
</dbReference>
<dbReference type="InterPro" id="IPR050129">
    <property type="entry name" value="Zn_alcohol_dh"/>
</dbReference>
<dbReference type="NCBIfam" id="NF003808">
    <property type="entry name" value="PRK05396.1"/>
    <property type="match status" value="1"/>
</dbReference>
<dbReference type="NCBIfam" id="TIGR00692">
    <property type="entry name" value="tdh"/>
    <property type="match status" value="1"/>
</dbReference>
<dbReference type="PANTHER" id="PTHR43401">
    <property type="entry name" value="L-THREONINE 3-DEHYDROGENASE"/>
    <property type="match status" value="1"/>
</dbReference>
<dbReference type="PANTHER" id="PTHR43401:SF2">
    <property type="entry name" value="L-THREONINE 3-DEHYDROGENASE"/>
    <property type="match status" value="1"/>
</dbReference>
<dbReference type="Pfam" id="PF08240">
    <property type="entry name" value="ADH_N"/>
    <property type="match status" value="1"/>
</dbReference>
<dbReference type="Pfam" id="PF00107">
    <property type="entry name" value="ADH_zinc_N"/>
    <property type="match status" value="1"/>
</dbReference>
<dbReference type="SMART" id="SM00829">
    <property type="entry name" value="PKS_ER"/>
    <property type="match status" value="1"/>
</dbReference>
<dbReference type="SUPFAM" id="SSF50129">
    <property type="entry name" value="GroES-like"/>
    <property type="match status" value="1"/>
</dbReference>
<dbReference type="SUPFAM" id="SSF51735">
    <property type="entry name" value="NAD(P)-binding Rossmann-fold domains"/>
    <property type="match status" value="1"/>
</dbReference>
<dbReference type="PROSITE" id="PS00059">
    <property type="entry name" value="ADH_ZINC"/>
    <property type="match status" value="1"/>
</dbReference>
<reference key="1">
    <citation type="journal article" date="2008" name="J. Bacteriol.">
        <title>The complete genome sequence of Escherichia coli DH10B: insights into the biology of a laboratory workhorse.</title>
        <authorList>
            <person name="Durfee T."/>
            <person name="Nelson R."/>
            <person name="Baldwin S."/>
            <person name="Plunkett G. III"/>
            <person name="Burland V."/>
            <person name="Mau B."/>
            <person name="Petrosino J.F."/>
            <person name="Qin X."/>
            <person name="Muzny D.M."/>
            <person name="Ayele M."/>
            <person name="Gibbs R.A."/>
            <person name="Csorgo B."/>
            <person name="Posfai G."/>
            <person name="Weinstock G.M."/>
            <person name="Blattner F.R."/>
        </authorList>
    </citation>
    <scope>NUCLEOTIDE SEQUENCE [LARGE SCALE GENOMIC DNA]</scope>
    <source>
        <strain>K12 / DH10B</strain>
    </source>
</reference>
<keyword id="KW-0963">Cytoplasm</keyword>
<keyword id="KW-0479">Metal-binding</keyword>
<keyword id="KW-0520">NAD</keyword>
<keyword id="KW-0560">Oxidoreductase</keyword>
<keyword id="KW-0862">Zinc</keyword>
<accession>B1X950</accession>
<evidence type="ECO:0000255" key="1">
    <source>
        <dbReference type="HAMAP-Rule" id="MF_00627"/>
    </source>
</evidence>
<organism>
    <name type="scientific">Escherichia coli (strain K12 / DH10B)</name>
    <dbReference type="NCBI Taxonomy" id="316385"/>
    <lineage>
        <taxon>Bacteria</taxon>
        <taxon>Pseudomonadati</taxon>
        <taxon>Pseudomonadota</taxon>
        <taxon>Gammaproteobacteria</taxon>
        <taxon>Enterobacterales</taxon>
        <taxon>Enterobacteriaceae</taxon>
        <taxon>Escherichia</taxon>
    </lineage>
</organism>
<sequence>MKALSKLKAEEGIWMTDVPVPELGHNDLLIKIRKTAICGTDVHIYNWDEWSQKTIPVPMVVGHEYVGEVVGIGQEVKGFKIGDRVSGEGHITCGHCRNCRGGRTHLCRNTIGVGVNRPGCFAEYLVIPAFNAFKIPDNISDDLAAIFDPFGNAVHTALSFDLVGEDVLVSGAGPIGIMAAAVAKHVGARNVVITDVNEYRLELARKMGITRAVNVAKENLNDVMAELGMTEGFDVGLEMSGAPPAFRTMLDTMNHGGRIAMLGIPPSDMSIDWTKVIFKGLFIKGIYGREMFETWYKMAALIQSGLDLSPIITHRFSIDDFQKGFDAMRSGQSGKVILSWD</sequence>